<gene>
    <name type="primary">PPE23</name>
    <name type="ordered locus">MT1746</name>
</gene>
<name>PPE23_MYCTO</name>
<comment type="similarity">
    <text evidence="1">Belongs to the mycobacterial PPE family.</text>
</comment>
<evidence type="ECO:0000305" key="1"/>
<keyword id="KW-1185">Reference proteome</keyword>
<feature type="chain" id="PRO_0000428085" description="Uncharacterized PPE family protein PPE23">
    <location>
        <begin position="1"/>
        <end position="394"/>
    </location>
</feature>
<proteinExistence type="inferred from homology"/>
<organism>
    <name type="scientific">Mycobacterium tuberculosis (strain CDC 1551 / Oshkosh)</name>
    <dbReference type="NCBI Taxonomy" id="83331"/>
    <lineage>
        <taxon>Bacteria</taxon>
        <taxon>Bacillati</taxon>
        <taxon>Actinomycetota</taxon>
        <taxon>Actinomycetes</taxon>
        <taxon>Mycobacteriales</taxon>
        <taxon>Mycobacteriaceae</taxon>
        <taxon>Mycobacterium</taxon>
        <taxon>Mycobacterium tuberculosis complex</taxon>
    </lineage>
</organism>
<protein>
    <recommendedName>
        <fullName>Uncharacterized PPE family protein PPE23</fullName>
    </recommendedName>
</protein>
<dbReference type="EMBL" id="AE000516">
    <property type="protein sequence ID" value="AAK46015.1"/>
    <property type="molecule type" value="Genomic_DNA"/>
</dbReference>
<dbReference type="PIR" id="A70504">
    <property type="entry name" value="A70504"/>
</dbReference>
<dbReference type="RefSeq" id="WP_003898980.1">
    <property type="nucleotide sequence ID" value="NZ_KK341227.1"/>
</dbReference>
<dbReference type="SMR" id="P9WI16"/>
<dbReference type="KEGG" id="mtc:MT1746"/>
<dbReference type="PATRIC" id="fig|83331.31.peg.1874"/>
<dbReference type="HOGENOM" id="CLU_000243_0_2_11"/>
<dbReference type="Proteomes" id="UP000001020">
    <property type="component" value="Chromosome"/>
</dbReference>
<dbReference type="GO" id="GO:0052572">
    <property type="term" value="P:response to host immune response"/>
    <property type="evidence" value="ECO:0007669"/>
    <property type="project" value="TreeGrafter"/>
</dbReference>
<dbReference type="FunFam" id="1.20.1260.20:FF:000001">
    <property type="entry name" value="PPE family protein PPE41"/>
    <property type="match status" value="1"/>
</dbReference>
<dbReference type="Gene3D" id="1.20.1260.20">
    <property type="entry name" value="PPE superfamily"/>
    <property type="match status" value="1"/>
</dbReference>
<dbReference type="InterPro" id="IPR022171">
    <property type="entry name" value="PPE_C"/>
</dbReference>
<dbReference type="InterPro" id="IPR000030">
    <property type="entry name" value="PPE_dom"/>
</dbReference>
<dbReference type="InterPro" id="IPR038332">
    <property type="entry name" value="PPE_sf"/>
</dbReference>
<dbReference type="PANTHER" id="PTHR46766">
    <property type="entry name" value="GLUTAMINE-RICH PROTEIN 2"/>
    <property type="match status" value="1"/>
</dbReference>
<dbReference type="PANTHER" id="PTHR46766:SF1">
    <property type="entry name" value="GLUTAMINE-RICH PROTEIN 2"/>
    <property type="match status" value="1"/>
</dbReference>
<dbReference type="Pfam" id="PF00823">
    <property type="entry name" value="PPE"/>
    <property type="match status" value="1"/>
</dbReference>
<dbReference type="Pfam" id="PF12484">
    <property type="entry name" value="PPE-SVP"/>
    <property type="match status" value="1"/>
</dbReference>
<dbReference type="SUPFAM" id="SSF140459">
    <property type="entry name" value="PE/PPE dimer-like"/>
    <property type="match status" value="1"/>
</dbReference>
<accession>P9WI16</accession>
<accession>L0T7F9</accession>
<accession>Q79FL5</accession>
<accession>Q7D842</accession>
<sequence>MTLDVPVNQGHVPPGSVACCLVGVTAVADGIAGHSLSNFGALPPEINSGRMYSGPGSGPLMAAAAAWDGLAAELSSAATGYGAAISELTNMRWWSGPASDSMVAAVLPFVGWLSTTATLAEQAAMQARAAAAAFEAAFAMTVPPPAIAANRTLLMTLVDTNWFGQNTPAIATTESQYAEMWAQDAAAMYGYASAAAPATVLTPFAPPPQTTNATGLVGHATAVAALRGQHSWAAAIPWSDIQKYWMMFLGALATAEGFIYDSGGLTLNALQFVGGMLWSTALAEAGAAEAAAGAGGAAGWSAWSQLGAGPVAASATLAAKIGPMSVPPGWSAPPATPQAQTVARSIPGIRSAAEAAETSVLLRGAPTPGRSRAAHMGRRYGRRLTVMADRPNVG</sequence>
<reference key="1">
    <citation type="journal article" date="2002" name="J. Bacteriol.">
        <title>Whole-genome comparison of Mycobacterium tuberculosis clinical and laboratory strains.</title>
        <authorList>
            <person name="Fleischmann R.D."/>
            <person name="Alland D."/>
            <person name="Eisen J.A."/>
            <person name="Carpenter L."/>
            <person name="White O."/>
            <person name="Peterson J.D."/>
            <person name="DeBoy R.T."/>
            <person name="Dodson R.J."/>
            <person name="Gwinn M.L."/>
            <person name="Haft D.H."/>
            <person name="Hickey E.K."/>
            <person name="Kolonay J.F."/>
            <person name="Nelson W.C."/>
            <person name="Umayam L.A."/>
            <person name="Ermolaeva M.D."/>
            <person name="Salzberg S.L."/>
            <person name="Delcher A."/>
            <person name="Utterback T.R."/>
            <person name="Weidman J.F."/>
            <person name="Khouri H.M."/>
            <person name="Gill J."/>
            <person name="Mikula A."/>
            <person name="Bishai W."/>
            <person name="Jacobs W.R. Jr."/>
            <person name="Venter J.C."/>
            <person name="Fraser C.M."/>
        </authorList>
    </citation>
    <scope>NUCLEOTIDE SEQUENCE [LARGE SCALE GENOMIC DNA]</scope>
    <source>
        <strain>CDC 1551 / Oshkosh</strain>
    </source>
</reference>